<feature type="chain" id="PRO_0000243270" description="Dephospho-CoA kinase">
    <location>
        <begin position="1"/>
        <end position="203"/>
    </location>
</feature>
<feature type="domain" description="DPCK" evidence="1">
    <location>
        <begin position="3"/>
        <end position="201"/>
    </location>
</feature>
<feature type="binding site" evidence="1">
    <location>
        <begin position="11"/>
        <end position="16"/>
    </location>
    <ligand>
        <name>ATP</name>
        <dbReference type="ChEBI" id="CHEBI:30616"/>
    </ligand>
</feature>
<comment type="function">
    <text evidence="1">Catalyzes the phosphorylation of the 3'-hydroxyl group of dephosphocoenzyme A to form coenzyme A.</text>
</comment>
<comment type="catalytic activity">
    <reaction evidence="1">
        <text>3'-dephospho-CoA + ATP = ADP + CoA + H(+)</text>
        <dbReference type="Rhea" id="RHEA:18245"/>
        <dbReference type="ChEBI" id="CHEBI:15378"/>
        <dbReference type="ChEBI" id="CHEBI:30616"/>
        <dbReference type="ChEBI" id="CHEBI:57287"/>
        <dbReference type="ChEBI" id="CHEBI:57328"/>
        <dbReference type="ChEBI" id="CHEBI:456216"/>
        <dbReference type="EC" id="2.7.1.24"/>
    </reaction>
</comment>
<comment type="pathway">
    <text evidence="1">Cofactor biosynthesis; coenzyme A biosynthesis; CoA from (R)-pantothenate: step 5/5.</text>
</comment>
<comment type="subcellular location">
    <subcellularLocation>
        <location evidence="1">Cytoplasm</location>
    </subcellularLocation>
</comment>
<comment type="similarity">
    <text evidence="1">Belongs to the CoaE family.</text>
</comment>
<organism>
    <name type="scientific">Burkholderia thailandensis (strain ATCC 700388 / DSM 13276 / CCUG 48851 / CIP 106301 / E264)</name>
    <dbReference type="NCBI Taxonomy" id="271848"/>
    <lineage>
        <taxon>Bacteria</taxon>
        <taxon>Pseudomonadati</taxon>
        <taxon>Pseudomonadota</taxon>
        <taxon>Betaproteobacteria</taxon>
        <taxon>Burkholderiales</taxon>
        <taxon>Burkholderiaceae</taxon>
        <taxon>Burkholderia</taxon>
        <taxon>pseudomallei group</taxon>
    </lineage>
</organism>
<accession>Q2SZG8</accession>
<evidence type="ECO:0000255" key="1">
    <source>
        <dbReference type="HAMAP-Rule" id="MF_00376"/>
    </source>
</evidence>
<proteinExistence type="inferred from homology"/>
<reference key="1">
    <citation type="journal article" date="2005" name="BMC Genomics">
        <title>Bacterial genome adaptation to niches: divergence of the potential virulence genes in three Burkholderia species of different survival strategies.</title>
        <authorList>
            <person name="Kim H.S."/>
            <person name="Schell M.A."/>
            <person name="Yu Y."/>
            <person name="Ulrich R.L."/>
            <person name="Sarria S.H."/>
            <person name="Nierman W.C."/>
            <person name="DeShazer D."/>
        </authorList>
    </citation>
    <scope>NUCLEOTIDE SEQUENCE [LARGE SCALE GENOMIC DNA]</scope>
    <source>
        <strain>ATCC 700388 / DSM 13276 / CCUG 48851 / CIP 106301 / E264</strain>
    </source>
</reference>
<dbReference type="EC" id="2.7.1.24" evidence="1"/>
<dbReference type="EMBL" id="CP000086">
    <property type="protein sequence ID" value="ABC39050.1"/>
    <property type="molecule type" value="Genomic_DNA"/>
</dbReference>
<dbReference type="RefSeq" id="WP_009888803.1">
    <property type="nucleotide sequence ID" value="NC_007651.1"/>
</dbReference>
<dbReference type="SMR" id="Q2SZG8"/>
<dbReference type="GeneID" id="45120885"/>
<dbReference type="KEGG" id="bte:BTH_I1133"/>
<dbReference type="HOGENOM" id="CLU_057180_1_2_4"/>
<dbReference type="UniPathway" id="UPA00241">
    <property type="reaction ID" value="UER00356"/>
</dbReference>
<dbReference type="Proteomes" id="UP000001930">
    <property type="component" value="Chromosome I"/>
</dbReference>
<dbReference type="GO" id="GO:0005737">
    <property type="term" value="C:cytoplasm"/>
    <property type="evidence" value="ECO:0007669"/>
    <property type="project" value="UniProtKB-SubCell"/>
</dbReference>
<dbReference type="GO" id="GO:0005524">
    <property type="term" value="F:ATP binding"/>
    <property type="evidence" value="ECO:0007669"/>
    <property type="project" value="UniProtKB-UniRule"/>
</dbReference>
<dbReference type="GO" id="GO:0004140">
    <property type="term" value="F:dephospho-CoA kinase activity"/>
    <property type="evidence" value="ECO:0007669"/>
    <property type="project" value="UniProtKB-UniRule"/>
</dbReference>
<dbReference type="GO" id="GO:0015937">
    <property type="term" value="P:coenzyme A biosynthetic process"/>
    <property type="evidence" value="ECO:0007669"/>
    <property type="project" value="UniProtKB-UniRule"/>
</dbReference>
<dbReference type="CDD" id="cd02022">
    <property type="entry name" value="DPCK"/>
    <property type="match status" value="1"/>
</dbReference>
<dbReference type="Gene3D" id="3.40.50.300">
    <property type="entry name" value="P-loop containing nucleotide triphosphate hydrolases"/>
    <property type="match status" value="1"/>
</dbReference>
<dbReference type="HAMAP" id="MF_00376">
    <property type="entry name" value="Dephospho_CoA_kinase"/>
    <property type="match status" value="1"/>
</dbReference>
<dbReference type="InterPro" id="IPR001977">
    <property type="entry name" value="Depp_CoAkinase"/>
</dbReference>
<dbReference type="InterPro" id="IPR027417">
    <property type="entry name" value="P-loop_NTPase"/>
</dbReference>
<dbReference type="NCBIfam" id="TIGR00152">
    <property type="entry name" value="dephospho-CoA kinase"/>
    <property type="match status" value="1"/>
</dbReference>
<dbReference type="PANTHER" id="PTHR10695:SF46">
    <property type="entry name" value="BIFUNCTIONAL COENZYME A SYNTHASE-RELATED"/>
    <property type="match status" value="1"/>
</dbReference>
<dbReference type="PANTHER" id="PTHR10695">
    <property type="entry name" value="DEPHOSPHO-COA KINASE-RELATED"/>
    <property type="match status" value="1"/>
</dbReference>
<dbReference type="Pfam" id="PF01121">
    <property type="entry name" value="CoaE"/>
    <property type="match status" value="1"/>
</dbReference>
<dbReference type="SUPFAM" id="SSF52540">
    <property type="entry name" value="P-loop containing nucleoside triphosphate hydrolases"/>
    <property type="match status" value="1"/>
</dbReference>
<dbReference type="PROSITE" id="PS51219">
    <property type="entry name" value="DPCK"/>
    <property type="match status" value="1"/>
</dbReference>
<gene>
    <name evidence="1" type="primary">coaE</name>
    <name type="ordered locus">BTH_I1133</name>
</gene>
<name>COAE_BURTA</name>
<sequence length="203" mass="21731">MFSVGLTGGIGSGKTTVSNLFGALGATIVDTDLIAHRITAPHGLAMPFIEREFGAQFVAADGSLDRAKMRALIFSDESARKRLEAITHPLIREETEREAGAAHGAYVVFVVPLLVESGTWEARVDRVLVVDCDVETQIARVMSRNGFAREQVEAIVARQASRDARLAAADDVIVNDNASLDELAAEVAALHQRYLGYAAAAPN</sequence>
<protein>
    <recommendedName>
        <fullName evidence="1">Dephospho-CoA kinase</fullName>
        <ecNumber evidence="1">2.7.1.24</ecNumber>
    </recommendedName>
    <alternativeName>
        <fullName evidence="1">Dephosphocoenzyme A kinase</fullName>
    </alternativeName>
</protein>
<keyword id="KW-0067">ATP-binding</keyword>
<keyword id="KW-0173">Coenzyme A biosynthesis</keyword>
<keyword id="KW-0963">Cytoplasm</keyword>
<keyword id="KW-0418">Kinase</keyword>
<keyword id="KW-0547">Nucleotide-binding</keyword>
<keyword id="KW-0808">Transferase</keyword>